<comment type="function">
    <text evidence="1">Involved in the dimethyl sulfide degradation pathway. Activates the expression of sfnG and sfnF.</text>
</comment>
<dbReference type="EMBL" id="CP000094">
    <property type="protein sequence ID" value="ABA75655.1"/>
    <property type="molecule type" value="Genomic_DNA"/>
</dbReference>
<dbReference type="RefSeq" id="WP_011335233.1">
    <property type="nucleotide sequence ID" value="NC_007492.2"/>
</dbReference>
<dbReference type="SMR" id="Q3K999"/>
<dbReference type="KEGG" id="pfo:Pfl01_3918"/>
<dbReference type="eggNOG" id="COG3829">
    <property type="taxonomic scope" value="Bacteria"/>
</dbReference>
<dbReference type="HOGENOM" id="CLU_000445_0_7_6"/>
<dbReference type="Proteomes" id="UP000002704">
    <property type="component" value="Chromosome"/>
</dbReference>
<dbReference type="GO" id="GO:0005524">
    <property type="term" value="F:ATP binding"/>
    <property type="evidence" value="ECO:0007669"/>
    <property type="project" value="UniProtKB-KW"/>
</dbReference>
<dbReference type="GO" id="GO:0016887">
    <property type="term" value="F:ATP hydrolysis activity"/>
    <property type="evidence" value="ECO:0007669"/>
    <property type="project" value="InterPro"/>
</dbReference>
<dbReference type="GO" id="GO:0003677">
    <property type="term" value="F:DNA binding"/>
    <property type="evidence" value="ECO:0007669"/>
    <property type="project" value="UniProtKB-KW"/>
</dbReference>
<dbReference type="GO" id="GO:0006355">
    <property type="term" value="P:regulation of DNA-templated transcription"/>
    <property type="evidence" value="ECO:0007669"/>
    <property type="project" value="InterPro"/>
</dbReference>
<dbReference type="CDD" id="cd00009">
    <property type="entry name" value="AAA"/>
    <property type="match status" value="1"/>
</dbReference>
<dbReference type="FunFam" id="3.40.50.300:FF:000006">
    <property type="entry name" value="DNA-binding transcriptional regulator NtrC"/>
    <property type="match status" value="1"/>
</dbReference>
<dbReference type="Gene3D" id="1.10.8.60">
    <property type="match status" value="1"/>
</dbReference>
<dbReference type="Gene3D" id="1.10.10.60">
    <property type="entry name" value="Homeodomain-like"/>
    <property type="match status" value="1"/>
</dbReference>
<dbReference type="Gene3D" id="3.40.50.300">
    <property type="entry name" value="P-loop containing nucleotide triphosphate hydrolases"/>
    <property type="match status" value="1"/>
</dbReference>
<dbReference type="InterPro" id="IPR003593">
    <property type="entry name" value="AAA+_ATPase"/>
</dbReference>
<dbReference type="InterPro" id="IPR009057">
    <property type="entry name" value="Homeodomain-like_sf"/>
</dbReference>
<dbReference type="InterPro" id="IPR027417">
    <property type="entry name" value="P-loop_NTPase"/>
</dbReference>
<dbReference type="InterPro" id="IPR002078">
    <property type="entry name" value="Sigma_54_int"/>
</dbReference>
<dbReference type="InterPro" id="IPR025662">
    <property type="entry name" value="Sigma_54_int_dom_ATP-bd_1"/>
</dbReference>
<dbReference type="InterPro" id="IPR025943">
    <property type="entry name" value="Sigma_54_int_dom_ATP-bd_2"/>
</dbReference>
<dbReference type="InterPro" id="IPR025944">
    <property type="entry name" value="Sigma_54_int_dom_CS"/>
</dbReference>
<dbReference type="PANTHER" id="PTHR32071">
    <property type="entry name" value="TRANSCRIPTIONAL REGULATORY PROTEIN"/>
    <property type="match status" value="1"/>
</dbReference>
<dbReference type="PANTHER" id="PTHR32071:SF21">
    <property type="entry name" value="TRANSCRIPTIONAL REGULATORY PROTEIN FLGR"/>
    <property type="match status" value="1"/>
</dbReference>
<dbReference type="Pfam" id="PF00158">
    <property type="entry name" value="Sigma54_activat"/>
    <property type="match status" value="1"/>
</dbReference>
<dbReference type="SMART" id="SM00382">
    <property type="entry name" value="AAA"/>
    <property type="match status" value="1"/>
</dbReference>
<dbReference type="SUPFAM" id="SSF46689">
    <property type="entry name" value="Homeodomain-like"/>
    <property type="match status" value="1"/>
</dbReference>
<dbReference type="SUPFAM" id="SSF52540">
    <property type="entry name" value="P-loop containing nucleoside triphosphate hydrolases"/>
    <property type="match status" value="1"/>
</dbReference>
<dbReference type="PROSITE" id="PS00675">
    <property type="entry name" value="SIGMA54_INTERACT_1"/>
    <property type="match status" value="1"/>
</dbReference>
<dbReference type="PROSITE" id="PS00676">
    <property type="entry name" value="SIGMA54_INTERACT_2"/>
    <property type="match status" value="1"/>
</dbReference>
<dbReference type="PROSITE" id="PS00688">
    <property type="entry name" value="SIGMA54_INTERACT_3"/>
    <property type="match status" value="1"/>
</dbReference>
<dbReference type="PROSITE" id="PS50045">
    <property type="entry name" value="SIGMA54_INTERACT_4"/>
    <property type="match status" value="1"/>
</dbReference>
<sequence length="367" mass="41035">MQLLTLPPSPALATSIRATAQVFEDPKSQALLAHLQQVAPSEASVLIIGETGTGKELVARHIHNLSNRRNRPFIAVNCGAFSESLVEAELFGHEKGAFTGALSAKAGWFEEADGGTLFLDEIGDLPMAIQVKLLRVLQEREVVRLGSRKSIPIDVRVLAATNVQLEKAINAGHFREDLYYRLNVVNLELSPLRDRPGDILPLTRHFIEAYSQRLGYGRVTISPGAEHKLRGYSWPGNIRELENVIHHTLLICRNGVIERDDLRLSNLRIDRPDDQHATADDSPEALLERAFQKLFEQQAGALHEKVEDALLRSAYRFCHYNQVHTASLLGLSRNVTRTRLIKIGELAVNKRRPTENLQGERLIQLSI</sequence>
<reference key="1">
    <citation type="journal article" date="2009" name="Genome Biol.">
        <title>Genomic and genetic analyses of diversity and plant interactions of Pseudomonas fluorescens.</title>
        <authorList>
            <person name="Silby M.W."/>
            <person name="Cerdeno-Tarraga A.M."/>
            <person name="Vernikos G.S."/>
            <person name="Giddens S.R."/>
            <person name="Jackson R.W."/>
            <person name="Preston G.M."/>
            <person name="Zhang X.-X."/>
            <person name="Moon C.D."/>
            <person name="Gehrig S.M."/>
            <person name="Godfrey S.A.C."/>
            <person name="Knight C.G."/>
            <person name="Malone J.G."/>
            <person name="Robinson Z."/>
            <person name="Spiers A.J."/>
            <person name="Harris S."/>
            <person name="Challis G.L."/>
            <person name="Yaxley A.M."/>
            <person name="Harris D."/>
            <person name="Seeger K."/>
            <person name="Murphy L."/>
            <person name="Rutter S."/>
            <person name="Squares R."/>
            <person name="Quail M.A."/>
            <person name="Saunders E."/>
            <person name="Mavromatis K."/>
            <person name="Brettin T.S."/>
            <person name="Bentley S.D."/>
            <person name="Hothersall J."/>
            <person name="Stephens E."/>
            <person name="Thomas C.M."/>
            <person name="Parkhill J."/>
            <person name="Levy S.B."/>
            <person name="Rainey P.B."/>
            <person name="Thomson N.R."/>
        </authorList>
    </citation>
    <scope>NUCLEOTIDE SEQUENCE [LARGE SCALE GENOMIC DNA]</scope>
    <source>
        <strain evidence="3 4">Pf0-1</strain>
    </source>
</reference>
<organism>
    <name type="scientific">Pseudomonas fluorescens (strain Pf0-1)</name>
    <dbReference type="NCBI Taxonomy" id="205922"/>
    <lineage>
        <taxon>Bacteria</taxon>
        <taxon>Pseudomonadati</taxon>
        <taxon>Pseudomonadota</taxon>
        <taxon>Gammaproteobacteria</taxon>
        <taxon>Pseudomonadales</taxon>
        <taxon>Pseudomonadaceae</taxon>
        <taxon>Pseudomonas</taxon>
    </lineage>
</organism>
<accession>Q3K999</accession>
<evidence type="ECO:0000250" key="1">
    <source>
        <dbReference type="UniProtKB" id="Q845S7"/>
    </source>
</evidence>
<evidence type="ECO:0000255" key="2">
    <source>
        <dbReference type="PROSITE-ProRule" id="PRU00193"/>
    </source>
</evidence>
<evidence type="ECO:0000312" key="3">
    <source>
        <dbReference type="EMBL" id="ABA75655.1"/>
    </source>
</evidence>
<evidence type="ECO:0000312" key="4">
    <source>
        <dbReference type="Proteomes" id="UP000002704"/>
    </source>
</evidence>
<name>SFNR_PSEPF</name>
<protein>
    <recommendedName>
        <fullName evidence="1">Sigma54-dependent transcriptional regulator SfnR</fullName>
    </recommendedName>
</protein>
<proteinExistence type="inferred from homology"/>
<keyword id="KW-0010">Activator</keyword>
<keyword id="KW-0067">ATP-binding</keyword>
<keyword id="KW-0238">DNA-binding</keyword>
<keyword id="KW-0547">Nucleotide-binding</keyword>
<keyword id="KW-0804">Transcription</keyword>
<keyword id="KW-0805">Transcription regulation</keyword>
<gene>
    <name evidence="1" type="primary">sfnR</name>
    <name evidence="3" type="ordered locus">Pfl01_3918</name>
</gene>
<feature type="chain" id="PRO_0000443544" description="Sigma54-dependent transcriptional regulator SfnR">
    <location>
        <begin position="1"/>
        <end position="367"/>
    </location>
</feature>
<feature type="domain" description="Sigma-54 factor interaction" evidence="2">
    <location>
        <begin position="21"/>
        <end position="250"/>
    </location>
</feature>
<feature type="binding site" evidence="2">
    <location>
        <begin position="49"/>
        <end position="56"/>
    </location>
    <ligand>
        <name>ATP</name>
        <dbReference type="ChEBI" id="CHEBI:30616"/>
    </ligand>
</feature>
<feature type="binding site" evidence="2">
    <location>
        <begin position="112"/>
        <end position="121"/>
    </location>
    <ligand>
        <name>ATP</name>
        <dbReference type="ChEBI" id="CHEBI:30616"/>
    </ligand>
</feature>